<organism>
    <name type="scientific">Barley yellow dwarf virus (isolate MAV)</name>
    <name type="common">BYDV</name>
    <dbReference type="NCBI Taxonomy" id="2169984"/>
    <lineage>
        <taxon>Viruses</taxon>
        <taxon>Riboviria</taxon>
        <taxon>Orthornavirae</taxon>
        <taxon>Kitrinoviricota</taxon>
        <taxon>Tolucaviricetes</taxon>
        <taxon>Tolivirales</taxon>
        <taxon>Tombusviridae</taxon>
        <taxon>Regressovirinae</taxon>
        <taxon>Luteovirus</taxon>
        <taxon>Luteovirus mavhordei</taxon>
    </lineage>
</organism>
<organismHost>
    <name type="scientific">Avena byzantina</name>
    <dbReference type="NCBI Taxonomy" id="146531"/>
</organismHost>
<organismHost>
    <name type="scientific">Avena sativa</name>
    <name type="common">Oat</name>
    <dbReference type="NCBI Taxonomy" id="4498"/>
</organismHost>
<organismHost>
    <name type="scientific">Hordeum vulgare</name>
    <name type="common">Barley</name>
    <dbReference type="NCBI Taxonomy" id="4513"/>
</organismHost>
<organismHost>
    <name type="scientific">Lolium multiflorum</name>
    <name type="common">Italian ryegrass</name>
    <name type="synonym">Lolium perenne subsp. multiflorum</name>
    <dbReference type="NCBI Taxonomy" id="4521"/>
</organismHost>
<organismHost>
    <name type="scientific">Lolium perenne</name>
    <name type="common">Perennial ryegrass</name>
    <dbReference type="NCBI Taxonomy" id="4522"/>
</organismHost>
<organismHost>
    <name type="scientific">Oryza sativa</name>
    <name type="common">Rice</name>
    <dbReference type="NCBI Taxonomy" id="4530"/>
</organismHost>
<organismHost>
    <name type="scientific">Secale cereale</name>
    <name type="common">Rye</name>
    <dbReference type="NCBI Taxonomy" id="4550"/>
</organismHost>
<organismHost>
    <name type="scientific">Triticum aestivum</name>
    <name type="common">Wheat</name>
    <dbReference type="NCBI Taxonomy" id="4565"/>
</organismHost>
<organismHost>
    <name type="scientific">Zea mays</name>
    <name type="common">Maize</name>
    <dbReference type="NCBI Taxonomy" id="4577"/>
</organismHost>
<evidence type="ECO:0000250" key="1"/>
<evidence type="ECO:0000256" key="2">
    <source>
        <dbReference type="SAM" id="MobiDB-lite"/>
    </source>
</evidence>
<evidence type="ECO:0000305" key="3"/>
<accession>P29046</accession>
<dbReference type="EMBL" id="X17260">
    <property type="protein sequence ID" value="CAA35163.1"/>
    <property type="molecule type" value="Genomic_RNA"/>
</dbReference>
<dbReference type="EMBL" id="D11028">
    <property type="protein sequence ID" value="BAA01782.1"/>
    <property type="molecule type" value="Genomic_RNA"/>
</dbReference>
<dbReference type="KEGG" id="vg:940439"/>
<dbReference type="Proteomes" id="UP000203063">
    <property type="component" value="Segment"/>
</dbReference>
<dbReference type="GO" id="GO:0046740">
    <property type="term" value="P:transport of virus in host, cell to cell"/>
    <property type="evidence" value="ECO:0007669"/>
    <property type="project" value="UniProtKB-KW"/>
</dbReference>
<dbReference type="InterPro" id="IPR001964">
    <property type="entry name" value="Luteo_VPG"/>
</dbReference>
<dbReference type="Pfam" id="PF01659">
    <property type="entry name" value="Luteo_Vpg"/>
    <property type="match status" value="1"/>
</dbReference>
<dbReference type="PRINTS" id="PR00912">
    <property type="entry name" value="LVIRUSORF5"/>
</dbReference>
<keyword id="KW-1185">Reference proteome</keyword>
<keyword id="KW-0813">Transport</keyword>
<keyword id="KW-0916">Viral movement protein</keyword>
<gene>
    <name type="ORF">ORF4</name>
</gene>
<reference key="1">
    <citation type="journal article" date="1990" name="J. Gen. Virol.">
        <title>Nucleotide sequences of coat protein genes for three isolates of barley yellow dwarf virus and their relationships to other luteovirus coat protein sequences.</title>
        <authorList>
            <person name="Vincent J.R."/>
            <person name="Ueng P.P."/>
            <person name="Lister R.M."/>
            <person name="Larkins B.A."/>
        </authorList>
    </citation>
    <scope>NUCLEOTIDE SEQUENCE [GENOMIC RNA]</scope>
</reference>
<reference key="2">
    <citation type="journal article" date="1992" name="J. Gen. Virol.">
        <title>Nucleotide sequence analysis of the genomes of the MAV-PS1 and P-PAV isolates of barley yellow dwarf virus.</title>
        <authorList>
            <person name="Ueng P.P."/>
            <person name="Vincent J.R."/>
            <person name="Kawata E.E."/>
            <person name="Lei C.H."/>
            <person name="Lister R.M."/>
            <person name="Larkins B.A."/>
        </authorList>
    </citation>
    <scope>NUCLEOTIDE SEQUENCE [GENOMIC RNA]</scope>
</reference>
<comment type="function">
    <text evidence="1">Transports viral genome to neighboring plant cells directly through plasmosdesmata, without any budding. The movement protein allows efficient cell to cell propagation, by bypassing the host cell wall barrier (By similarity).</text>
</comment>
<comment type="similarity">
    <text evidence="3">Belongs to the luteoviruses movement protein family.</text>
</comment>
<feature type="chain" id="PRO_0000222418" description="Movement protein">
    <location>
        <begin position="1"/>
        <end position="154"/>
    </location>
</feature>
<feature type="region of interest" description="Disordered" evidence="2">
    <location>
        <begin position="83"/>
        <end position="103"/>
    </location>
</feature>
<feature type="region of interest" description="Disordered" evidence="2">
    <location>
        <begin position="123"/>
        <end position="154"/>
    </location>
</feature>
<protein>
    <recommendedName>
        <fullName>Movement protein</fullName>
        <shortName>MP</shortName>
    </recommendedName>
    <alternativeName>
        <fullName>17 kDa protein</fullName>
    </alternativeName>
</protein>
<proteinExistence type="inferred from homology"/>
<sequence>MAQGEQGALAQFGEWLWSNPIEPDQNDELVDAQEEEGQILYLDQQAGLRYSYSQSTTLRPTPQGQSSSVPTFRNAQRFQVEYSSPTTFTRSQTSRLSLSHTRPPLQSAQCLLNSTLGAHNQPWVATLTHSPSQNQQPKPSPPNRLTGRNSGRVR</sequence>
<name>MVP_BYDVM</name>